<comment type="function">
    <text evidence="1">Together with the chaperonin GroEL, plays an essential role in assisting protein folding. The GroEL-GroES system forms a nano-cage that allows encapsulation of the non-native substrate proteins and provides a physical environment optimized to promote and accelerate protein folding. GroES binds to the apical surface of the GroEL ring, thereby capping the opening of the GroEL channel.</text>
</comment>
<comment type="subunit">
    <text evidence="1">Heptamer of 7 subunits arranged in a ring. Interacts with the chaperonin GroEL.</text>
</comment>
<comment type="subcellular location">
    <subcellularLocation>
        <location evidence="1">Cytoplasm</location>
    </subcellularLocation>
</comment>
<comment type="similarity">
    <text evidence="1">Belongs to the GroES chaperonin family.</text>
</comment>
<feature type="chain" id="PRO_1000025215" description="Co-chaperonin GroES">
    <location>
        <begin position="1"/>
        <end position="97"/>
    </location>
</feature>
<name>CH10_BAUCH</name>
<proteinExistence type="inferred from homology"/>
<accession>Q1LSP4</accession>
<gene>
    <name evidence="1" type="primary">groES</name>
    <name evidence="1" type="synonym">groS</name>
    <name type="ordered locus">BCI_0592</name>
</gene>
<evidence type="ECO:0000255" key="1">
    <source>
        <dbReference type="HAMAP-Rule" id="MF_00580"/>
    </source>
</evidence>
<sequence>MKIRPLHDRVIVKRKEVESKSAGGIMLTGSAAGKSTRGEVLAVGRGRSLDNGEIKALDVKVGDTIIFNDGYGVKVEKIDNEEVLIMSESDILAIVEK</sequence>
<protein>
    <recommendedName>
        <fullName evidence="1">Co-chaperonin GroES</fullName>
    </recommendedName>
    <alternativeName>
        <fullName evidence="1">10 kDa chaperonin</fullName>
    </alternativeName>
    <alternativeName>
        <fullName evidence="1">Chaperonin-10</fullName>
        <shortName evidence="1">Cpn10</shortName>
    </alternativeName>
</protein>
<keyword id="KW-0143">Chaperone</keyword>
<keyword id="KW-0963">Cytoplasm</keyword>
<keyword id="KW-1185">Reference proteome</keyword>
<organism>
    <name type="scientific">Baumannia cicadellinicola subsp. Homalodisca coagulata</name>
    <dbReference type="NCBI Taxonomy" id="374463"/>
    <lineage>
        <taxon>Bacteria</taxon>
        <taxon>Pseudomonadati</taxon>
        <taxon>Pseudomonadota</taxon>
        <taxon>Gammaproteobacteria</taxon>
        <taxon>Candidatus Palibaumannia</taxon>
    </lineage>
</organism>
<dbReference type="EMBL" id="CP000238">
    <property type="protein sequence ID" value="ABF14307.1"/>
    <property type="molecule type" value="Genomic_DNA"/>
</dbReference>
<dbReference type="RefSeq" id="WP_011520753.1">
    <property type="nucleotide sequence ID" value="NC_007984.1"/>
</dbReference>
<dbReference type="SMR" id="Q1LSP4"/>
<dbReference type="STRING" id="374463.BCI_0592"/>
<dbReference type="KEGG" id="bci:BCI_0592"/>
<dbReference type="HOGENOM" id="CLU_132825_1_1_6"/>
<dbReference type="OrthoDB" id="9806791at2"/>
<dbReference type="Proteomes" id="UP000002427">
    <property type="component" value="Chromosome"/>
</dbReference>
<dbReference type="GO" id="GO:0005737">
    <property type="term" value="C:cytoplasm"/>
    <property type="evidence" value="ECO:0007669"/>
    <property type="project" value="UniProtKB-SubCell"/>
</dbReference>
<dbReference type="GO" id="GO:0005524">
    <property type="term" value="F:ATP binding"/>
    <property type="evidence" value="ECO:0007669"/>
    <property type="project" value="InterPro"/>
</dbReference>
<dbReference type="GO" id="GO:0046872">
    <property type="term" value="F:metal ion binding"/>
    <property type="evidence" value="ECO:0007669"/>
    <property type="project" value="TreeGrafter"/>
</dbReference>
<dbReference type="GO" id="GO:0044183">
    <property type="term" value="F:protein folding chaperone"/>
    <property type="evidence" value="ECO:0007669"/>
    <property type="project" value="InterPro"/>
</dbReference>
<dbReference type="GO" id="GO:0051087">
    <property type="term" value="F:protein-folding chaperone binding"/>
    <property type="evidence" value="ECO:0007669"/>
    <property type="project" value="TreeGrafter"/>
</dbReference>
<dbReference type="GO" id="GO:0051082">
    <property type="term" value="F:unfolded protein binding"/>
    <property type="evidence" value="ECO:0007669"/>
    <property type="project" value="TreeGrafter"/>
</dbReference>
<dbReference type="GO" id="GO:0051085">
    <property type="term" value="P:chaperone cofactor-dependent protein refolding"/>
    <property type="evidence" value="ECO:0007669"/>
    <property type="project" value="TreeGrafter"/>
</dbReference>
<dbReference type="CDD" id="cd00320">
    <property type="entry name" value="cpn10"/>
    <property type="match status" value="1"/>
</dbReference>
<dbReference type="FunFam" id="2.30.33.40:FF:000001">
    <property type="entry name" value="10 kDa chaperonin"/>
    <property type="match status" value="1"/>
</dbReference>
<dbReference type="Gene3D" id="2.30.33.40">
    <property type="entry name" value="GroES chaperonin"/>
    <property type="match status" value="1"/>
</dbReference>
<dbReference type="HAMAP" id="MF_00580">
    <property type="entry name" value="CH10"/>
    <property type="match status" value="1"/>
</dbReference>
<dbReference type="InterPro" id="IPR020818">
    <property type="entry name" value="Chaperonin_GroES"/>
</dbReference>
<dbReference type="InterPro" id="IPR037124">
    <property type="entry name" value="Chaperonin_GroES_sf"/>
</dbReference>
<dbReference type="InterPro" id="IPR018369">
    <property type="entry name" value="Chaprnonin_Cpn10_CS"/>
</dbReference>
<dbReference type="InterPro" id="IPR011032">
    <property type="entry name" value="GroES-like_sf"/>
</dbReference>
<dbReference type="NCBIfam" id="NF001526">
    <property type="entry name" value="PRK00364.1-1"/>
    <property type="match status" value="1"/>
</dbReference>
<dbReference type="NCBIfam" id="NF001527">
    <property type="entry name" value="PRK00364.1-2"/>
    <property type="match status" value="1"/>
</dbReference>
<dbReference type="NCBIfam" id="NF001531">
    <property type="entry name" value="PRK00364.2-2"/>
    <property type="match status" value="1"/>
</dbReference>
<dbReference type="PANTHER" id="PTHR10772">
    <property type="entry name" value="10 KDA HEAT SHOCK PROTEIN"/>
    <property type="match status" value="1"/>
</dbReference>
<dbReference type="PANTHER" id="PTHR10772:SF58">
    <property type="entry name" value="CO-CHAPERONIN GROES"/>
    <property type="match status" value="1"/>
</dbReference>
<dbReference type="Pfam" id="PF00166">
    <property type="entry name" value="Cpn10"/>
    <property type="match status" value="1"/>
</dbReference>
<dbReference type="PRINTS" id="PR00297">
    <property type="entry name" value="CHAPERONIN10"/>
</dbReference>
<dbReference type="SMART" id="SM00883">
    <property type="entry name" value="Cpn10"/>
    <property type="match status" value="1"/>
</dbReference>
<dbReference type="SUPFAM" id="SSF50129">
    <property type="entry name" value="GroES-like"/>
    <property type="match status" value="1"/>
</dbReference>
<dbReference type="PROSITE" id="PS00681">
    <property type="entry name" value="CHAPERONINS_CPN10"/>
    <property type="match status" value="1"/>
</dbReference>
<reference key="1">
    <citation type="journal article" date="2006" name="PLoS Biol.">
        <title>Metabolic complementarity and genomics of the dual bacterial symbiosis of sharpshooters.</title>
        <authorList>
            <person name="Wu D."/>
            <person name="Daugherty S.C."/>
            <person name="Van Aken S.E."/>
            <person name="Pai G.H."/>
            <person name="Watkins K.L."/>
            <person name="Khouri H."/>
            <person name="Tallon L.J."/>
            <person name="Zaborsky J.M."/>
            <person name="Dunbar H.E."/>
            <person name="Tran P.L."/>
            <person name="Moran N.A."/>
            <person name="Eisen J.A."/>
        </authorList>
    </citation>
    <scope>NUCLEOTIDE SEQUENCE [LARGE SCALE GENOMIC DNA]</scope>
</reference>